<name>TREA_KLULA</name>
<keyword id="KW-0106">Calcium</keyword>
<keyword id="KW-0963">Cytoplasm</keyword>
<keyword id="KW-0326">Glycosidase</keyword>
<keyword id="KW-0378">Hydrolase</keyword>
<keyword id="KW-0479">Metal-binding</keyword>
<keyword id="KW-1185">Reference proteome</keyword>
<dbReference type="EC" id="3.2.1.28" evidence="7"/>
<dbReference type="EMBL" id="X81421">
    <property type="protein sequence ID" value="CAA57181.1"/>
    <property type="molecule type" value="Genomic_DNA"/>
</dbReference>
<dbReference type="EMBL" id="CR382125">
    <property type="protein sequence ID" value="CAG99815.1"/>
    <property type="molecule type" value="Genomic_DNA"/>
</dbReference>
<dbReference type="RefSeq" id="XP_454728.1">
    <property type="nucleotide sequence ID" value="XM_454728.1"/>
</dbReference>
<dbReference type="SMR" id="P49381"/>
<dbReference type="FunCoup" id="P49381">
    <property type="interactions" value="357"/>
</dbReference>
<dbReference type="STRING" id="284590.P49381"/>
<dbReference type="CAZy" id="GH37">
    <property type="family name" value="Glycoside Hydrolase Family 37"/>
</dbReference>
<dbReference type="PaxDb" id="284590-P49381"/>
<dbReference type="KEGG" id="kla:KLLA0_E17271g"/>
<dbReference type="eggNOG" id="KOG0602">
    <property type="taxonomic scope" value="Eukaryota"/>
</dbReference>
<dbReference type="HOGENOM" id="CLU_006451_1_1_1"/>
<dbReference type="InParanoid" id="P49381"/>
<dbReference type="OMA" id="WLFMMTK"/>
<dbReference type="Proteomes" id="UP000000598">
    <property type="component" value="Chromosome E"/>
</dbReference>
<dbReference type="GO" id="GO:0005737">
    <property type="term" value="C:cytoplasm"/>
    <property type="evidence" value="ECO:0007669"/>
    <property type="project" value="UniProtKB-SubCell"/>
</dbReference>
<dbReference type="GO" id="GO:0004555">
    <property type="term" value="F:alpha,alpha-trehalase activity"/>
    <property type="evidence" value="ECO:0007669"/>
    <property type="project" value="UniProtKB-EC"/>
</dbReference>
<dbReference type="GO" id="GO:0005509">
    <property type="term" value="F:calcium ion binding"/>
    <property type="evidence" value="ECO:0007669"/>
    <property type="project" value="InterPro"/>
</dbReference>
<dbReference type="GO" id="GO:0005993">
    <property type="term" value="P:trehalose catabolic process"/>
    <property type="evidence" value="ECO:0007669"/>
    <property type="project" value="InterPro"/>
</dbReference>
<dbReference type="FunFam" id="1.50.10.10:FF:000026">
    <property type="entry name" value="Trehalase"/>
    <property type="match status" value="1"/>
</dbReference>
<dbReference type="Gene3D" id="1.50.10.10">
    <property type="match status" value="1"/>
</dbReference>
<dbReference type="InterPro" id="IPR008928">
    <property type="entry name" value="6-hairpin_glycosidase_sf"/>
</dbReference>
<dbReference type="InterPro" id="IPR012341">
    <property type="entry name" value="6hp_glycosidase-like_sf"/>
</dbReference>
<dbReference type="InterPro" id="IPR001661">
    <property type="entry name" value="Glyco_hydro_37"/>
</dbReference>
<dbReference type="InterPro" id="IPR018232">
    <property type="entry name" value="Glyco_hydro_37_CS"/>
</dbReference>
<dbReference type="InterPro" id="IPR011120">
    <property type="entry name" value="Trehalase_Ca-bd"/>
</dbReference>
<dbReference type="PANTHER" id="PTHR23403:SF6">
    <property type="entry name" value="CYTOSOLIC NEUTRAL TREHALASE-RELATED"/>
    <property type="match status" value="1"/>
</dbReference>
<dbReference type="PANTHER" id="PTHR23403">
    <property type="entry name" value="TREHALASE"/>
    <property type="match status" value="1"/>
</dbReference>
<dbReference type="Pfam" id="PF01204">
    <property type="entry name" value="Trehalase"/>
    <property type="match status" value="1"/>
</dbReference>
<dbReference type="Pfam" id="PF07492">
    <property type="entry name" value="Trehalase_Ca-bi"/>
    <property type="match status" value="1"/>
</dbReference>
<dbReference type="PRINTS" id="PR00744">
    <property type="entry name" value="GLHYDRLASE37"/>
</dbReference>
<dbReference type="SUPFAM" id="SSF48208">
    <property type="entry name" value="Six-hairpin glycosidases"/>
    <property type="match status" value="1"/>
</dbReference>
<dbReference type="PROSITE" id="PS00927">
    <property type="entry name" value="TREHALASE_1"/>
    <property type="match status" value="1"/>
</dbReference>
<dbReference type="PROSITE" id="PS00928">
    <property type="entry name" value="TREHALASE_2"/>
    <property type="match status" value="1"/>
</dbReference>
<comment type="function">
    <text evidence="4 7">Hydrolyzes intracellular trehalose to glucose (Probable). The disaccharide trehalose serves as a storage molecule for energy and carbohydrates that is mobilized during nutrient stress (PubMed:9075620).</text>
</comment>
<comment type="catalytic activity">
    <reaction evidence="7">
        <text>alpha,alpha-trehalose + H2O = alpha-D-glucose + beta-D-glucose</text>
        <dbReference type="Rhea" id="RHEA:32675"/>
        <dbReference type="ChEBI" id="CHEBI:15377"/>
        <dbReference type="ChEBI" id="CHEBI:15903"/>
        <dbReference type="ChEBI" id="CHEBI:16551"/>
        <dbReference type="ChEBI" id="CHEBI:17925"/>
        <dbReference type="EC" id="3.2.1.28"/>
    </reaction>
</comment>
<comment type="cofactor">
    <cofactor evidence="7">
        <name>Ca(2+)</name>
        <dbReference type="ChEBI" id="CHEBI:29108"/>
    </cofactor>
</comment>
<comment type="pathway">
    <text evidence="6">Carbohydrate degradation.</text>
</comment>
<comment type="subcellular location">
    <subcellularLocation>
        <location evidence="2">Cytoplasm</location>
    </subcellularLocation>
</comment>
<comment type="similarity">
    <text evidence="6">Belongs to the glycosyl hydrolase 37 family.</text>
</comment>
<accession>P49381</accession>
<sequence>MDGKVNNNPPRSRHRRTSSLEEVVDPFSTPDVYYGPKSDPSKLLSKNRFTRTRTFSVAEPGGGKGHSSSYTSPYFDTTVPLRRRGSEDDSYSASQGQRRFYIEDVDKTLKELLASEDTDGNYQITIEDTGPKVIRVGTVNSNGYKHVHIRGTYMLSNLLQELTLAKLFNRKQVILDEARLNENPVNRMTRLISGQFWKSLTRRIDSNNIAKIAYDTKIDTPKAKNPRIYVPYNCQDEYQQLVQWSEMDPSLQLEVNYLPKDITPEFVKSLNDKPGLLCLAMESHMDPVTGEETWVGFPYAVPGGRFNELYGWDSYFMALGLLESNKLDVARGMVEHFIFEIDHYGKILNANRSYYLCRSQPPFLTDMALQVCRKMGGDKNPVAVDLLRRAFKAAIKEYLTVWTASPRLDEKTGLSCYHPDGIGIPPETEPGHFDSILRKYAEKYNVSIPEFRDLYNSQKVHEPDLDVFFLHDRGVRESGHDTTYRFENVCAYLATIDLNSLLYKYEVDIAYVIKKYFGDNFEGLPEGHRTSNDWEKLAEVRKERIDKYLWDEETGFYYDYNVKTEKRTSYESVTTFWALWAGMSSQEQAQRMVENALPKLEEFGGLVACTARSRGELSLDRPTRQWDYPFGWAPHQILVWDGLVRYGYENHTRRLAYRWLFLMTKAFVDYNGIVVEKYDVTRGTDPHRVDAEYGNQGADFKGVATEGFGWVNSSYLLGMKYMNNFARRALGTCVTPKVFFGRLPPKEKKKYGLE</sequence>
<reference key="1">
    <citation type="journal article" date="1997" name="Arch. Microbiol.">
        <title>Molecular cloning of the neutral trehalase gene from Kluyveromyces lactis and the distinction between neutral and acid trehalases.</title>
        <authorList>
            <person name="Amaral F.C."/>
            <person name="van Dijck P."/>
            <person name="Nicoli J.R."/>
            <person name="Thevelein J.M."/>
        </authorList>
    </citation>
    <scope>NUCLEOTIDE SEQUENCE [GENOMIC DNA]</scope>
    <scope>FUNCTION</scope>
    <scope>CATALYTIC ACTIVITY</scope>
    <scope>COFACTOR</scope>
    <source>
        <strain>ATCC 8585 / CBS 2359 / DSM 70799 / NBRC 1267 / NRRL Y-1140 / WM37</strain>
    </source>
</reference>
<reference key="2">
    <citation type="journal article" date="2004" name="Nature">
        <title>Genome evolution in yeasts.</title>
        <authorList>
            <person name="Dujon B."/>
            <person name="Sherman D."/>
            <person name="Fischer G."/>
            <person name="Durrens P."/>
            <person name="Casaregola S."/>
            <person name="Lafontaine I."/>
            <person name="de Montigny J."/>
            <person name="Marck C."/>
            <person name="Neuveglise C."/>
            <person name="Talla E."/>
            <person name="Goffard N."/>
            <person name="Frangeul L."/>
            <person name="Aigle M."/>
            <person name="Anthouard V."/>
            <person name="Babour A."/>
            <person name="Barbe V."/>
            <person name="Barnay S."/>
            <person name="Blanchin S."/>
            <person name="Beckerich J.-M."/>
            <person name="Beyne E."/>
            <person name="Bleykasten C."/>
            <person name="Boisrame A."/>
            <person name="Boyer J."/>
            <person name="Cattolico L."/>
            <person name="Confanioleri F."/>
            <person name="de Daruvar A."/>
            <person name="Despons L."/>
            <person name="Fabre E."/>
            <person name="Fairhead C."/>
            <person name="Ferry-Dumazet H."/>
            <person name="Groppi A."/>
            <person name="Hantraye F."/>
            <person name="Hennequin C."/>
            <person name="Jauniaux N."/>
            <person name="Joyet P."/>
            <person name="Kachouri R."/>
            <person name="Kerrest A."/>
            <person name="Koszul R."/>
            <person name="Lemaire M."/>
            <person name="Lesur I."/>
            <person name="Ma L."/>
            <person name="Muller H."/>
            <person name="Nicaud J.-M."/>
            <person name="Nikolski M."/>
            <person name="Oztas S."/>
            <person name="Ozier-Kalogeropoulos O."/>
            <person name="Pellenz S."/>
            <person name="Potier S."/>
            <person name="Richard G.-F."/>
            <person name="Straub M.-L."/>
            <person name="Suleau A."/>
            <person name="Swennen D."/>
            <person name="Tekaia F."/>
            <person name="Wesolowski-Louvel M."/>
            <person name="Westhof E."/>
            <person name="Wirth B."/>
            <person name="Zeniou-Meyer M."/>
            <person name="Zivanovic Y."/>
            <person name="Bolotin-Fukuhara M."/>
            <person name="Thierry A."/>
            <person name="Bouchier C."/>
            <person name="Caudron B."/>
            <person name="Scarpelli C."/>
            <person name="Gaillardin C."/>
            <person name="Weissenbach J."/>
            <person name="Wincker P."/>
            <person name="Souciet J.-L."/>
        </authorList>
    </citation>
    <scope>NUCLEOTIDE SEQUENCE [LARGE SCALE GENOMIC DNA]</scope>
    <source>
        <strain>ATCC 8585 / CBS 2359 / DSM 70799 / NBRC 1267 / NRRL Y-1140 / WM37</strain>
    </source>
</reference>
<evidence type="ECO:0000250" key="1">
    <source>
        <dbReference type="UniProtKB" id="P13482"/>
    </source>
</evidence>
<evidence type="ECO:0000250" key="2">
    <source>
        <dbReference type="UniProtKB" id="P32356"/>
    </source>
</evidence>
<evidence type="ECO:0000256" key="3">
    <source>
        <dbReference type="SAM" id="MobiDB-lite"/>
    </source>
</evidence>
<evidence type="ECO:0000269" key="4">
    <source>
    </source>
</evidence>
<evidence type="ECO:0000303" key="5">
    <source>
    </source>
</evidence>
<evidence type="ECO:0000305" key="6"/>
<evidence type="ECO:0000305" key="7">
    <source>
    </source>
</evidence>
<proteinExistence type="evidence at protein level"/>
<organism>
    <name type="scientific">Kluyveromyces lactis (strain ATCC 8585 / CBS 2359 / DSM 70799 / NBRC 1267 / NRRL Y-1140 / WM37)</name>
    <name type="common">Yeast</name>
    <name type="synonym">Candida sphaerica</name>
    <dbReference type="NCBI Taxonomy" id="284590"/>
    <lineage>
        <taxon>Eukaryota</taxon>
        <taxon>Fungi</taxon>
        <taxon>Dikarya</taxon>
        <taxon>Ascomycota</taxon>
        <taxon>Saccharomycotina</taxon>
        <taxon>Saccharomycetes</taxon>
        <taxon>Saccharomycetales</taxon>
        <taxon>Saccharomycetaceae</taxon>
        <taxon>Kluyveromyces</taxon>
    </lineage>
</organism>
<protein>
    <recommendedName>
        <fullName evidence="5">Cytosolic neutral trehalase</fullName>
        <ecNumber evidence="7">3.2.1.28</ecNumber>
    </recommendedName>
    <alternativeName>
        <fullName>Alpha,alpha-trehalase</fullName>
    </alternativeName>
    <alternativeName>
        <fullName>Alpha,alpha-trehalose glucohydrolase</fullName>
    </alternativeName>
    <alternativeName>
        <fullName evidence="5">KlNTH1</fullName>
    </alternativeName>
</protein>
<feature type="chain" id="PRO_0000173794" description="Cytosolic neutral trehalase">
    <location>
        <begin position="1"/>
        <end position="754"/>
    </location>
</feature>
<feature type="region of interest" description="Disordered" evidence="3">
    <location>
        <begin position="1"/>
        <end position="47"/>
    </location>
</feature>
<feature type="region of interest" description="Disordered" evidence="3">
    <location>
        <begin position="54"/>
        <end position="73"/>
    </location>
</feature>
<feature type="compositionally biased region" description="Polar residues" evidence="3">
    <location>
        <begin position="1"/>
        <end position="10"/>
    </location>
</feature>
<feature type="active site" description="Proton donor/acceptor" evidence="1">
    <location>
        <position position="481"/>
    </location>
</feature>
<feature type="active site" description="Proton donor/acceptor" evidence="1">
    <location>
        <position position="676"/>
    </location>
</feature>
<feature type="binding site" evidence="2">
    <location>
        <position position="117"/>
    </location>
    <ligand>
        <name>Ca(2+)</name>
        <dbReference type="ChEBI" id="CHEBI:29108"/>
    </ligand>
</feature>
<feature type="binding site" evidence="2">
    <location>
        <position position="119"/>
    </location>
    <ligand>
        <name>Ca(2+)</name>
        <dbReference type="ChEBI" id="CHEBI:29108"/>
    </ligand>
</feature>
<feature type="binding site" evidence="2">
    <location>
        <position position="121"/>
    </location>
    <ligand>
        <name>Ca(2+)</name>
        <dbReference type="ChEBI" id="CHEBI:29108"/>
    </ligand>
</feature>
<feature type="binding site" evidence="2">
    <location>
        <position position="123"/>
    </location>
    <ligand>
        <name>Ca(2+)</name>
        <dbReference type="ChEBI" id="CHEBI:29108"/>
    </ligand>
</feature>
<feature type="binding site" evidence="2">
    <location>
        <position position="128"/>
    </location>
    <ligand>
        <name>Ca(2+)</name>
        <dbReference type="ChEBI" id="CHEBI:29108"/>
    </ligand>
</feature>
<feature type="binding site" evidence="1">
    <location>
        <position position="305"/>
    </location>
    <ligand>
        <name>substrate</name>
    </ligand>
</feature>
<feature type="binding site" evidence="1">
    <location>
        <begin position="312"/>
        <end position="313"/>
    </location>
    <ligand>
        <name>substrate</name>
    </ligand>
</feature>
<feature type="binding site" evidence="1">
    <location>
        <position position="349"/>
    </location>
    <ligand>
        <name>substrate</name>
    </ligand>
</feature>
<feature type="binding site" evidence="1">
    <location>
        <begin position="358"/>
        <end position="360"/>
    </location>
    <ligand>
        <name>substrate</name>
    </ligand>
</feature>
<feature type="binding site" evidence="2">
    <location>
        <position position="427"/>
    </location>
    <ligand>
        <name>substrate</name>
    </ligand>
</feature>
<feature type="binding site" evidence="2">
    <location>
        <position position="476"/>
    </location>
    <ligand>
        <name>substrate</name>
    </ligand>
</feature>
<feature type="binding site" evidence="1">
    <location>
        <position position="479"/>
    </location>
    <ligand>
        <name>substrate</name>
    </ligand>
</feature>
<gene>
    <name evidence="5" type="primary">NTH1</name>
    <name type="ordered locus">KLLA0E17325g</name>
</gene>